<reference key="1">
    <citation type="journal article" date="2015" name="Proc. Natl. Acad. Sci. U.S.A.">
        <title>Trichodesmium genome maintains abundant, widespread noncoding DNA in situ, despite oligotrophic lifestyle.</title>
        <authorList>
            <person name="Walworth N."/>
            <person name="Pfreundt U."/>
            <person name="Nelson W.C."/>
            <person name="Mincer T."/>
            <person name="Heidelberg J.F."/>
            <person name="Fu F."/>
            <person name="Waterbury J.B."/>
            <person name="Glavina del Rio T."/>
            <person name="Goodwin L."/>
            <person name="Kyrpides N.C."/>
            <person name="Land M.L."/>
            <person name="Woyke T."/>
            <person name="Hutchins D.A."/>
            <person name="Hess W.R."/>
            <person name="Webb E.A."/>
        </authorList>
    </citation>
    <scope>NUCLEOTIDE SEQUENCE [LARGE SCALE GENOMIC DNA]</scope>
    <source>
        <strain>IMS101</strain>
    </source>
</reference>
<comment type="catalytic activity">
    <reaction evidence="1">
        <text>urea + 2 H2O + H(+) = hydrogencarbonate + 2 NH4(+)</text>
        <dbReference type="Rhea" id="RHEA:20557"/>
        <dbReference type="ChEBI" id="CHEBI:15377"/>
        <dbReference type="ChEBI" id="CHEBI:15378"/>
        <dbReference type="ChEBI" id="CHEBI:16199"/>
        <dbReference type="ChEBI" id="CHEBI:17544"/>
        <dbReference type="ChEBI" id="CHEBI:28938"/>
        <dbReference type="EC" id="3.5.1.5"/>
    </reaction>
</comment>
<comment type="pathway">
    <text evidence="1">Nitrogen metabolism; urea degradation; CO(2) and NH(3) from urea (urease route): step 1/1.</text>
</comment>
<comment type="subunit">
    <text evidence="1">Heterotrimer of UreA (gamma), UreB (beta) and UreC (alpha) subunits. Three heterotrimers associate to form the active enzyme.</text>
</comment>
<comment type="subcellular location">
    <subcellularLocation>
        <location evidence="1">Cytoplasm</location>
    </subcellularLocation>
</comment>
<comment type="similarity">
    <text evidence="1">Belongs to the urease beta subunit family.</text>
</comment>
<gene>
    <name evidence="1" type="primary">ureB</name>
    <name type="ordered locus">Tery_0747</name>
</gene>
<proteinExistence type="inferred from homology"/>
<name>URE2_TRIEI</name>
<organism>
    <name type="scientific">Trichodesmium erythraeum (strain IMS101)</name>
    <dbReference type="NCBI Taxonomy" id="203124"/>
    <lineage>
        <taxon>Bacteria</taxon>
        <taxon>Bacillati</taxon>
        <taxon>Cyanobacteriota</taxon>
        <taxon>Cyanophyceae</taxon>
        <taxon>Oscillatoriophycideae</taxon>
        <taxon>Oscillatoriales</taxon>
        <taxon>Microcoleaceae</taxon>
        <taxon>Trichodesmium</taxon>
    </lineage>
</organism>
<sequence length="102" mass="11286">MIPGEIITQIGEIELNSGRSTIQVIVANTGDRPIQIGSHFHFYEVNSALEFEREPTKGMRLNIPAGTAVRFEPGDEKEVELVAIAGSREIYGFNSLVNQKLE</sequence>
<feature type="chain" id="PRO_1000070781" description="Urease subunit beta">
    <location>
        <begin position="1"/>
        <end position="102"/>
    </location>
</feature>
<accession>Q117Z8</accession>
<dbReference type="EC" id="3.5.1.5" evidence="1"/>
<dbReference type="EMBL" id="CP000393">
    <property type="protein sequence ID" value="ABG50176.1"/>
    <property type="molecule type" value="Genomic_DNA"/>
</dbReference>
<dbReference type="RefSeq" id="WP_011610569.1">
    <property type="nucleotide sequence ID" value="NC_008312.1"/>
</dbReference>
<dbReference type="SMR" id="Q117Z8"/>
<dbReference type="STRING" id="203124.Tery_0747"/>
<dbReference type="KEGG" id="ter:Tery_0747"/>
<dbReference type="eggNOG" id="COG0832">
    <property type="taxonomic scope" value="Bacteria"/>
</dbReference>
<dbReference type="HOGENOM" id="CLU_129707_1_1_3"/>
<dbReference type="OrthoDB" id="9797217at2"/>
<dbReference type="UniPathway" id="UPA00258">
    <property type="reaction ID" value="UER00370"/>
</dbReference>
<dbReference type="GO" id="GO:0035550">
    <property type="term" value="C:urease complex"/>
    <property type="evidence" value="ECO:0007669"/>
    <property type="project" value="InterPro"/>
</dbReference>
<dbReference type="GO" id="GO:0009039">
    <property type="term" value="F:urease activity"/>
    <property type="evidence" value="ECO:0007669"/>
    <property type="project" value="UniProtKB-UniRule"/>
</dbReference>
<dbReference type="GO" id="GO:0043419">
    <property type="term" value="P:urea catabolic process"/>
    <property type="evidence" value="ECO:0007669"/>
    <property type="project" value="UniProtKB-UniRule"/>
</dbReference>
<dbReference type="CDD" id="cd00407">
    <property type="entry name" value="Urease_beta"/>
    <property type="match status" value="1"/>
</dbReference>
<dbReference type="FunFam" id="2.10.150.10:FF:000001">
    <property type="entry name" value="Urease subunit beta"/>
    <property type="match status" value="1"/>
</dbReference>
<dbReference type="Gene3D" id="2.10.150.10">
    <property type="entry name" value="Urease, beta subunit"/>
    <property type="match status" value="1"/>
</dbReference>
<dbReference type="HAMAP" id="MF_01954">
    <property type="entry name" value="Urease_beta"/>
    <property type="match status" value="1"/>
</dbReference>
<dbReference type="InterPro" id="IPR002019">
    <property type="entry name" value="Urease_beta-like"/>
</dbReference>
<dbReference type="InterPro" id="IPR036461">
    <property type="entry name" value="Urease_betasu_sf"/>
</dbReference>
<dbReference type="InterPro" id="IPR050069">
    <property type="entry name" value="Urease_subunit"/>
</dbReference>
<dbReference type="NCBIfam" id="NF009682">
    <property type="entry name" value="PRK13203.1"/>
    <property type="match status" value="1"/>
</dbReference>
<dbReference type="NCBIfam" id="TIGR00192">
    <property type="entry name" value="urease_beta"/>
    <property type="match status" value="1"/>
</dbReference>
<dbReference type="PANTHER" id="PTHR33569">
    <property type="entry name" value="UREASE"/>
    <property type="match status" value="1"/>
</dbReference>
<dbReference type="PANTHER" id="PTHR33569:SF1">
    <property type="entry name" value="UREASE"/>
    <property type="match status" value="1"/>
</dbReference>
<dbReference type="Pfam" id="PF00699">
    <property type="entry name" value="Urease_beta"/>
    <property type="match status" value="1"/>
</dbReference>
<dbReference type="SUPFAM" id="SSF51278">
    <property type="entry name" value="Urease, beta-subunit"/>
    <property type="match status" value="1"/>
</dbReference>
<protein>
    <recommendedName>
        <fullName evidence="1">Urease subunit beta</fullName>
        <ecNumber evidence="1">3.5.1.5</ecNumber>
    </recommendedName>
    <alternativeName>
        <fullName evidence="1">Urea amidohydrolase subunit beta</fullName>
    </alternativeName>
</protein>
<keyword id="KW-0963">Cytoplasm</keyword>
<keyword id="KW-0378">Hydrolase</keyword>
<evidence type="ECO:0000255" key="1">
    <source>
        <dbReference type="HAMAP-Rule" id="MF_01954"/>
    </source>
</evidence>